<sequence>MARMYARRRGTSSSVRPYRKEAPEWSNTDATEIEKIVVDLRKDGMSTSQIGLVLRDRYAVPDVKLATGKRIGEILREKGLESEIPEDLRNLMEKALGIRKHLAENNKDVHNKRQLQIAESKVRRLVKYYVRSGRMPKGWTYKPETAEILLTR</sequence>
<gene>
    <name evidence="1" type="primary">rps15</name>
    <name type="ordered locus">Memar_0430</name>
</gene>
<feature type="chain" id="PRO_1000054815" description="Small ribosomal subunit protein uS15">
    <location>
        <begin position="1"/>
        <end position="152"/>
    </location>
</feature>
<feature type="region of interest" description="Disordered" evidence="2">
    <location>
        <begin position="1"/>
        <end position="24"/>
    </location>
</feature>
<feature type="compositionally biased region" description="Basic residues" evidence="2">
    <location>
        <begin position="1"/>
        <end position="10"/>
    </location>
</feature>
<organism>
    <name type="scientific">Methanoculleus marisnigri (strain ATCC 35101 / DSM 1498 / JR1)</name>
    <dbReference type="NCBI Taxonomy" id="368407"/>
    <lineage>
        <taxon>Archaea</taxon>
        <taxon>Methanobacteriati</taxon>
        <taxon>Methanobacteriota</taxon>
        <taxon>Stenosarchaea group</taxon>
        <taxon>Methanomicrobia</taxon>
        <taxon>Methanomicrobiales</taxon>
        <taxon>Methanomicrobiaceae</taxon>
        <taxon>Methanoculleus</taxon>
    </lineage>
</organism>
<dbReference type="EMBL" id="CP000562">
    <property type="protein sequence ID" value="ABN56363.1"/>
    <property type="molecule type" value="Genomic_DNA"/>
</dbReference>
<dbReference type="RefSeq" id="WP_011843273.1">
    <property type="nucleotide sequence ID" value="NC_009051.1"/>
</dbReference>
<dbReference type="SMR" id="A3CSL3"/>
<dbReference type="STRING" id="368407.Memar_0430"/>
<dbReference type="GeneID" id="4847417"/>
<dbReference type="KEGG" id="mem:Memar_0430"/>
<dbReference type="eggNOG" id="arCOG04185">
    <property type="taxonomic scope" value="Archaea"/>
</dbReference>
<dbReference type="HOGENOM" id="CLU_090139_2_0_2"/>
<dbReference type="OrthoDB" id="6533at2157"/>
<dbReference type="Proteomes" id="UP000002146">
    <property type="component" value="Chromosome"/>
</dbReference>
<dbReference type="GO" id="GO:0022627">
    <property type="term" value="C:cytosolic small ribosomal subunit"/>
    <property type="evidence" value="ECO:0007669"/>
    <property type="project" value="TreeGrafter"/>
</dbReference>
<dbReference type="GO" id="GO:0070181">
    <property type="term" value="F:small ribosomal subunit rRNA binding"/>
    <property type="evidence" value="ECO:0007669"/>
    <property type="project" value="TreeGrafter"/>
</dbReference>
<dbReference type="GO" id="GO:0003735">
    <property type="term" value="F:structural constituent of ribosome"/>
    <property type="evidence" value="ECO:0007669"/>
    <property type="project" value="InterPro"/>
</dbReference>
<dbReference type="GO" id="GO:0006412">
    <property type="term" value="P:translation"/>
    <property type="evidence" value="ECO:0007669"/>
    <property type="project" value="UniProtKB-UniRule"/>
</dbReference>
<dbReference type="CDD" id="cd00353">
    <property type="entry name" value="Ribosomal_S15p_S13e"/>
    <property type="match status" value="1"/>
</dbReference>
<dbReference type="FunFam" id="1.10.287.10:FF:000003">
    <property type="entry name" value="40S ribosomal protein S13"/>
    <property type="match status" value="1"/>
</dbReference>
<dbReference type="Gene3D" id="4.10.860.130">
    <property type="match status" value="1"/>
</dbReference>
<dbReference type="Gene3D" id="1.10.287.10">
    <property type="entry name" value="S15/NS1, RNA-binding"/>
    <property type="match status" value="1"/>
</dbReference>
<dbReference type="HAMAP" id="MF_01343_A">
    <property type="entry name" value="Ribosomal_uS15_A"/>
    <property type="match status" value="1"/>
</dbReference>
<dbReference type="InterPro" id="IPR000589">
    <property type="entry name" value="Ribosomal_uS15"/>
</dbReference>
<dbReference type="InterPro" id="IPR023029">
    <property type="entry name" value="Ribosomal_uS15_arc_euk"/>
</dbReference>
<dbReference type="InterPro" id="IPR012606">
    <property type="entry name" value="Ribosomal_uS15_N"/>
</dbReference>
<dbReference type="InterPro" id="IPR009068">
    <property type="entry name" value="uS15_NS1_RNA-bd_sf"/>
</dbReference>
<dbReference type="NCBIfam" id="NF006331">
    <property type="entry name" value="PRK08561.1"/>
    <property type="match status" value="1"/>
</dbReference>
<dbReference type="PANTHER" id="PTHR11885">
    <property type="entry name" value="RIBOSOMAL PROTEIN S15P/S13E"/>
    <property type="match status" value="1"/>
</dbReference>
<dbReference type="PANTHER" id="PTHR11885:SF6">
    <property type="entry name" value="SMALL RIBOSOMAL SUBUNIT PROTEIN US15"/>
    <property type="match status" value="1"/>
</dbReference>
<dbReference type="Pfam" id="PF08069">
    <property type="entry name" value="Ribosomal_S13_N"/>
    <property type="match status" value="1"/>
</dbReference>
<dbReference type="Pfam" id="PF00312">
    <property type="entry name" value="Ribosomal_S15"/>
    <property type="match status" value="1"/>
</dbReference>
<dbReference type="SMART" id="SM01386">
    <property type="entry name" value="Ribosomal_S13_N"/>
    <property type="match status" value="1"/>
</dbReference>
<dbReference type="SMART" id="SM01387">
    <property type="entry name" value="Ribosomal_S15"/>
    <property type="match status" value="1"/>
</dbReference>
<dbReference type="SUPFAM" id="SSF47060">
    <property type="entry name" value="S15/NS1 RNA-binding domain"/>
    <property type="match status" value="1"/>
</dbReference>
<comment type="subunit">
    <text evidence="1">Part of the 30S ribosomal subunit.</text>
</comment>
<comment type="similarity">
    <text evidence="1">Belongs to the universal ribosomal protein uS15 family.</text>
</comment>
<name>RS15_METMJ</name>
<accession>A3CSL3</accession>
<keyword id="KW-0687">Ribonucleoprotein</keyword>
<keyword id="KW-0689">Ribosomal protein</keyword>
<reference key="1">
    <citation type="journal article" date="2009" name="Stand. Genomic Sci.">
        <title>Complete genome sequence of Methanoculleus marisnigri Romesser et al. 1981 type strain JR1.</title>
        <authorList>
            <person name="Anderson I.J."/>
            <person name="Sieprawska-Lupa M."/>
            <person name="Lapidus A."/>
            <person name="Nolan M."/>
            <person name="Copeland A."/>
            <person name="Glavina Del Rio T."/>
            <person name="Tice H."/>
            <person name="Dalin E."/>
            <person name="Barry K."/>
            <person name="Saunders E."/>
            <person name="Han C."/>
            <person name="Brettin T."/>
            <person name="Detter J.C."/>
            <person name="Bruce D."/>
            <person name="Mikhailova N."/>
            <person name="Pitluck S."/>
            <person name="Hauser L."/>
            <person name="Land M."/>
            <person name="Lucas S."/>
            <person name="Richardson P."/>
            <person name="Whitman W.B."/>
            <person name="Kyrpides N.C."/>
        </authorList>
    </citation>
    <scope>NUCLEOTIDE SEQUENCE [LARGE SCALE GENOMIC DNA]</scope>
    <source>
        <strain>ATCC 35101 / DSM 1498 / JR1</strain>
    </source>
</reference>
<evidence type="ECO:0000255" key="1">
    <source>
        <dbReference type="HAMAP-Rule" id="MF_01343"/>
    </source>
</evidence>
<evidence type="ECO:0000256" key="2">
    <source>
        <dbReference type="SAM" id="MobiDB-lite"/>
    </source>
</evidence>
<evidence type="ECO:0000305" key="3"/>
<proteinExistence type="inferred from homology"/>
<protein>
    <recommendedName>
        <fullName evidence="1">Small ribosomal subunit protein uS15</fullName>
    </recommendedName>
    <alternativeName>
        <fullName evidence="3">30S ribosomal protein S15</fullName>
    </alternativeName>
</protein>